<reference key="1">
    <citation type="submission" date="2007-07" db="EMBL/GenBank/DDBJ databases">
        <title>Complete genome sequence of Campylobacter jejuni subsp doylei 269.97 isolated from human blood.</title>
        <authorList>
            <person name="Fouts D.E."/>
            <person name="Mongodin E.F."/>
            <person name="Puiu D."/>
            <person name="Sebastian Y."/>
            <person name="Miller W.G."/>
            <person name="Mandrell R.E."/>
            <person name="Lastovica A.J."/>
            <person name="Nelson K.E."/>
        </authorList>
    </citation>
    <scope>NUCLEOTIDE SEQUENCE [LARGE SCALE GENOMIC DNA]</scope>
    <source>
        <strain>ATCC BAA-1458 / RM4099 / 269.97</strain>
    </source>
</reference>
<keyword id="KW-0067">ATP-binding</keyword>
<keyword id="KW-0963">Cytoplasm</keyword>
<keyword id="KW-0418">Kinase</keyword>
<keyword id="KW-0460">Magnesium</keyword>
<keyword id="KW-0479">Metal-binding</keyword>
<keyword id="KW-0547">Nucleotide-binding</keyword>
<keyword id="KW-0808">Transferase</keyword>
<feature type="chain" id="PRO_1000002216" description="Acetate kinase">
    <location>
        <begin position="1"/>
        <end position="396"/>
    </location>
</feature>
<feature type="active site" description="Proton donor/acceptor" evidence="1">
    <location>
        <position position="145"/>
    </location>
</feature>
<feature type="binding site" evidence="1">
    <location>
        <position position="7"/>
    </location>
    <ligand>
        <name>Mg(2+)</name>
        <dbReference type="ChEBI" id="CHEBI:18420"/>
    </ligand>
</feature>
<feature type="binding site" evidence="1">
    <location>
        <position position="14"/>
    </location>
    <ligand>
        <name>ATP</name>
        <dbReference type="ChEBI" id="CHEBI:30616"/>
    </ligand>
</feature>
<feature type="binding site" evidence="1">
    <location>
        <position position="88"/>
    </location>
    <ligand>
        <name>substrate</name>
    </ligand>
</feature>
<feature type="binding site" evidence="1">
    <location>
        <begin position="205"/>
        <end position="209"/>
    </location>
    <ligand>
        <name>ATP</name>
        <dbReference type="ChEBI" id="CHEBI:30616"/>
    </ligand>
</feature>
<feature type="binding site" evidence="1">
    <location>
        <begin position="279"/>
        <end position="281"/>
    </location>
    <ligand>
        <name>ATP</name>
        <dbReference type="ChEBI" id="CHEBI:30616"/>
    </ligand>
</feature>
<feature type="binding site" evidence="1">
    <location>
        <begin position="327"/>
        <end position="331"/>
    </location>
    <ligand>
        <name>ATP</name>
        <dbReference type="ChEBI" id="CHEBI:30616"/>
    </ligand>
</feature>
<feature type="binding site" evidence="1">
    <location>
        <position position="381"/>
    </location>
    <ligand>
        <name>Mg(2+)</name>
        <dbReference type="ChEBI" id="CHEBI:18420"/>
    </ligand>
</feature>
<feature type="site" description="Transition state stabilizer" evidence="1">
    <location>
        <position position="177"/>
    </location>
</feature>
<feature type="site" description="Transition state stabilizer" evidence="1">
    <location>
        <position position="238"/>
    </location>
</feature>
<protein>
    <recommendedName>
        <fullName evidence="1">Acetate kinase</fullName>
        <ecNumber evidence="1">2.7.2.1</ecNumber>
    </recommendedName>
    <alternativeName>
        <fullName evidence="1">Acetokinase</fullName>
    </alternativeName>
</protein>
<evidence type="ECO:0000255" key="1">
    <source>
        <dbReference type="HAMAP-Rule" id="MF_00020"/>
    </source>
</evidence>
<accession>A7H4D5</accession>
<organism>
    <name type="scientific">Campylobacter jejuni subsp. doylei (strain ATCC BAA-1458 / RM4099 / 269.97)</name>
    <dbReference type="NCBI Taxonomy" id="360109"/>
    <lineage>
        <taxon>Bacteria</taxon>
        <taxon>Pseudomonadati</taxon>
        <taxon>Campylobacterota</taxon>
        <taxon>Epsilonproteobacteria</taxon>
        <taxon>Campylobacterales</taxon>
        <taxon>Campylobacteraceae</taxon>
        <taxon>Campylobacter</taxon>
    </lineage>
</organism>
<comment type="function">
    <text evidence="1">Catalyzes the formation of acetyl phosphate from acetate and ATP. Can also catalyze the reverse reaction.</text>
</comment>
<comment type="catalytic activity">
    <reaction evidence="1">
        <text>acetate + ATP = acetyl phosphate + ADP</text>
        <dbReference type="Rhea" id="RHEA:11352"/>
        <dbReference type="ChEBI" id="CHEBI:22191"/>
        <dbReference type="ChEBI" id="CHEBI:30089"/>
        <dbReference type="ChEBI" id="CHEBI:30616"/>
        <dbReference type="ChEBI" id="CHEBI:456216"/>
        <dbReference type="EC" id="2.7.2.1"/>
    </reaction>
</comment>
<comment type="cofactor">
    <cofactor evidence="1">
        <name>Mg(2+)</name>
        <dbReference type="ChEBI" id="CHEBI:18420"/>
    </cofactor>
    <cofactor evidence="1">
        <name>Mn(2+)</name>
        <dbReference type="ChEBI" id="CHEBI:29035"/>
    </cofactor>
    <text evidence="1">Mg(2+). Can also accept Mn(2+).</text>
</comment>
<comment type="pathway">
    <text evidence="1">Metabolic intermediate biosynthesis; acetyl-CoA biosynthesis; acetyl-CoA from acetate: step 1/2.</text>
</comment>
<comment type="subunit">
    <text evidence="1">Homodimer.</text>
</comment>
<comment type="subcellular location">
    <subcellularLocation>
        <location evidence="1">Cytoplasm</location>
    </subcellularLocation>
</comment>
<comment type="similarity">
    <text evidence="1">Belongs to the acetokinase family.</text>
</comment>
<sequence>MKILVLNSGSSSIKFKFFDNKIIKASGLVEKIGEQNSKVILKNVLNNESFERELTINNHEEGLSIVNELFKESGILADLNTLDGCGHRIVHGGRNLSEHCLVDDYVLKEIDRVSIFAPLHNPAHLAGIKTMIKAAPSVANVAIFDTAFHRTMPDFAYMYALPYDFYDKHNIRRYGFHGTSHAFVSSRAASLLEKDKSELNVISAHLGNGASVCAIEKGKSVDTSMGFTPLEGLVMGTRCGDLDPAILPFISHLKGLTIEEIDTLMNKKSGVYGICGYNDFRDIEREIEQGNDKARLALDMFCYRLVKYIGAYFAVLPKTDAIVFTGGIGENDSLVRQKVCERLAHLGIELDFELNKQRISGERMINHANSKVKVLVIPTDEELEIARITEELIGKN</sequence>
<gene>
    <name evidence="1" type="primary">ackA</name>
    <name type="ordered locus">JJD26997_1318</name>
</gene>
<dbReference type="EC" id="2.7.2.1" evidence="1"/>
<dbReference type="EMBL" id="CP000768">
    <property type="protein sequence ID" value="ABS44554.1"/>
    <property type="molecule type" value="Genomic_DNA"/>
</dbReference>
<dbReference type="SMR" id="A7H4D5"/>
<dbReference type="KEGG" id="cjd:JJD26997_1318"/>
<dbReference type="HOGENOM" id="CLU_020352_0_1_7"/>
<dbReference type="UniPathway" id="UPA00340">
    <property type="reaction ID" value="UER00458"/>
</dbReference>
<dbReference type="Proteomes" id="UP000002302">
    <property type="component" value="Chromosome"/>
</dbReference>
<dbReference type="GO" id="GO:0005737">
    <property type="term" value="C:cytoplasm"/>
    <property type="evidence" value="ECO:0007669"/>
    <property type="project" value="UniProtKB-SubCell"/>
</dbReference>
<dbReference type="GO" id="GO:0008776">
    <property type="term" value="F:acetate kinase activity"/>
    <property type="evidence" value="ECO:0007669"/>
    <property type="project" value="UniProtKB-UniRule"/>
</dbReference>
<dbReference type="GO" id="GO:0005524">
    <property type="term" value="F:ATP binding"/>
    <property type="evidence" value="ECO:0007669"/>
    <property type="project" value="UniProtKB-KW"/>
</dbReference>
<dbReference type="GO" id="GO:0000287">
    <property type="term" value="F:magnesium ion binding"/>
    <property type="evidence" value="ECO:0007669"/>
    <property type="project" value="UniProtKB-UniRule"/>
</dbReference>
<dbReference type="GO" id="GO:0006083">
    <property type="term" value="P:acetate metabolic process"/>
    <property type="evidence" value="ECO:0007669"/>
    <property type="project" value="TreeGrafter"/>
</dbReference>
<dbReference type="GO" id="GO:0006085">
    <property type="term" value="P:acetyl-CoA biosynthetic process"/>
    <property type="evidence" value="ECO:0007669"/>
    <property type="project" value="UniProtKB-UniRule"/>
</dbReference>
<dbReference type="CDD" id="cd24010">
    <property type="entry name" value="ASKHA_NBD_AcK_PK"/>
    <property type="match status" value="1"/>
</dbReference>
<dbReference type="Gene3D" id="3.30.420.40">
    <property type="match status" value="2"/>
</dbReference>
<dbReference type="HAMAP" id="MF_00020">
    <property type="entry name" value="Acetate_kinase"/>
    <property type="match status" value="1"/>
</dbReference>
<dbReference type="InterPro" id="IPR004372">
    <property type="entry name" value="Ac/propionate_kinase"/>
</dbReference>
<dbReference type="InterPro" id="IPR000890">
    <property type="entry name" value="Aliphatic_acid_kin_short-chain"/>
</dbReference>
<dbReference type="InterPro" id="IPR023865">
    <property type="entry name" value="Aliphatic_acid_kinase_CS"/>
</dbReference>
<dbReference type="InterPro" id="IPR043129">
    <property type="entry name" value="ATPase_NBD"/>
</dbReference>
<dbReference type="NCBIfam" id="TIGR00016">
    <property type="entry name" value="ackA"/>
    <property type="match status" value="1"/>
</dbReference>
<dbReference type="PANTHER" id="PTHR21060">
    <property type="entry name" value="ACETATE KINASE"/>
    <property type="match status" value="1"/>
</dbReference>
<dbReference type="PANTHER" id="PTHR21060:SF15">
    <property type="entry name" value="ACETATE KINASE-RELATED"/>
    <property type="match status" value="1"/>
</dbReference>
<dbReference type="Pfam" id="PF00871">
    <property type="entry name" value="Acetate_kinase"/>
    <property type="match status" value="1"/>
</dbReference>
<dbReference type="PIRSF" id="PIRSF000722">
    <property type="entry name" value="Acetate_prop_kin"/>
    <property type="match status" value="1"/>
</dbReference>
<dbReference type="PRINTS" id="PR00471">
    <property type="entry name" value="ACETATEKNASE"/>
</dbReference>
<dbReference type="SUPFAM" id="SSF53067">
    <property type="entry name" value="Actin-like ATPase domain"/>
    <property type="match status" value="2"/>
</dbReference>
<dbReference type="PROSITE" id="PS01075">
    <property type="entry name" value="ACETATE_KINASE_1"/>
    <property type="match status" value="1"/>
</dbReference>
<dbReference type="PROSITE" id="PS01076">
    <property type="entry name" value="ACETATE_KINASE_2"/>
    <property type="match status" value="1"/>
</dbReference>
<name>ACKA_CAMJD</name>
<proteinExistence type="inferred from homology"/>